<gene>
    <name type="primary">Ak7</name>
</gene>
<reference key="1">
    <citation type="journal article" date="2005" name="Science">
        <title>The transcriptional landscape of the mammalian genome.</title>
        <authorList>
            <person name="Carninci P."/>
            <person name="Kasukawa T."/>
            <person name="Katayama S."/>
            <person name="Gough J."/>
            <person name="Frith M.C."/>
            <person name="Maeda N."/>
            <person name="Oyama R."/>
            <person name="Ravasi T."/>
            <person name="Lenhard B."/>
            <person name="Wells C."/>
            <person name="Kodzius R."/>
            <person name="Shimokawa K."/>
            <person name="Bajic V.B."/>
            <person name="Brenner S.E."/>
            <person name="Batalov S."/>
            <person name="Forrest A.R."/>
            <person name="Zavolan M."/>
            <person name="Davis M.J."/>
            <person name="Wilming L.G."/>
            <person name="Aidinis V."/>
            <person name="Allen J.E."/>
            <person name="Ambesi-Impiombato A."/>
            <person name="Apweiler R."/>
            <person name="Aturaliya R.N."/>
            <person name="Bailey T.L."/>
            <person name="Bansal M."/>
            <person name="Baxter L."/>
            <person name="Beisel K.W."/>
            <person name="Bersano T."/>
            <person name="Bono H."/>
            <person name="Chalk A.M."/>
            <person name="Chiu K.P."/>
            <person name="Choudhary V."/>
            <person name="Christoffels A."/>
            <person name="Clutterbuck D.R."/>
            <person name="Crowe M.L."/>
            <person name="Dalla E."/>
            <person name="Dalrymple B.P."/>
            <person name="de Bono B."/>
            <person name="Della Gatta G."/>
            <person name="di Bernardo D."/>
            <person name="Down T."/>
            <person name="Engstrom P."/>
            <person name="Fagiolini M."/>
            <person name="Faulkner G."/>
            <person name="Fletcher C.F."/>
            <person name="Fukushima T."/>
            <person name="Furuno M."/>
            <person name="Futaki S."/>
            <person name="Gariboldi M."/>
            <person name="Georgii-Hemming P."/>
            <person name="Gingeras T.R."/>
            <person name="Gojobori T."/>
            <person name="Green R.E."/>
            <person name="Gustincich S."/>
            <person name="Harbers M."/>
            <person name="Hayashi Y."/>
            <person name="Hensch T.K."/>
            <person name="Hirokawa N."/>
            <person name="Hill D."/>
            <person name="Huminiecki L."/>
            <person name="Iacono M."/>
            <person name="Ikeo K."/>
            <person name="Iwama A."/>
            <person name="Ishikawa T."/>
            <person name="Jakt M."/>
            <person name="Kanapin A."/>
            <person name="Katoh M."/>
            <person name="Kawasawa Y."/>
            <person name="Kelso J."/>
            <person name="Kitamura H."/>
            <person name="Kitano H."/>
            <person name="Kollias G."/>
            <person name="Krishnan S.P."/>
            <person name="Kruger A."/>
            <person name="Kummerfeld S.K."/>
            <person name="Kurochkin I.V."/>
            <person name="Lareau L.F."/>
            <person name="Lazarevic D."/>
            <person name="Lipovich L."/>
            <person name="Liu J."/>
            <person name="Liuni S."/>
            <person name="McWilliam S."/>
            <person name="Madan Babu M."/>
            <person name="Madera M."/>
            <person name="Marchionni L."/>
            <person name="Matsuda H."/>
            <person name="Matsuzawa S."/>
            <person name="Miki H."/>
            <person name="Mignone F."/>
            <person name="Miyake S."/>
            <person name="Morris K."/>
            <person name="Mottagui-Tabar S."/>
            <person name="Mulder N."/>
            <person name="Nakano N."/>
            <person name="Nakauchi H."/>
            <person name="Ng P."/>
            <person name="Nilsson R."/>
            <person name="Nishiguchi S."/>
            <person name="Nishikawa S."/>
            <person name="Nori F."/>
            <person name="Ohara O."/>
            <person name="Okazaki Y."/>
            <person name="Orlando V."/>
            <person name="Pang K.C."/>
            <person name="Pavan W.J."/>
            <person name="Pavesi G."/>
            <person name="Pesole G."/>
            <person name="Petrovsky N."/>
            <person name="Piazza S."/>
            <person name="Reed J."/>
            <person name="Reid J.F."/>
            <person name="Ring B.Z."/>
            <person name="Ringwald M."/>
            <person name="Rost B."/>
            <person name="Ruan Y."/>
            <person name="Salzberg S.L."/>
            <person name="Sandelin A."/>
            <person name="Schneider C."/>
            <person name="Schoenbach C."/>
            <person name="Sekiguchi K."/>
            <person name="Semple C.A."/>
            <person name="Seno S."/>
            <person name="Sessa L."/>
            <person name="Sheng Y."/>
            <person name="Shibata Y."/>
            <person name="Shimada H."/>
            <person name="Shimada K."/>
            <person name="Silva D."/>
            <person name="Sinclair B."/>
            <person name="Sperling S."/>
            <person name="Stupka E."/>
            <person name="Sugiura K."/>
            <person name="Sultana R."/>
            <person name="Takenaka Y."/>
            <person name="Taki K."/>
            <person name="Tammoja K."/>
            <person name="Tan S.L."/>
            <person name="Tang S."/>
            <person name="Taylor M.S."/>
            <person name="Tegner J."/>
            <person name="Teichmann S.A."/>
            <person name="Ueda H.R."/>
            <person name="van Nimwegen E."/>
            <person name="Verardo R."/>
            <person name="Wei C.L."/>
            <person name="Yagi K."/>
            <person name="Yamanishi H."/>
            <person name="Zabarovsky E."/>
            <person name="Zhu S."/>
            <person name="Zimmer A."/>
            <person name="Hide W."/>
            <person name="Bult C."/>
            <person name="Grimmond S.M."/>
            <person name="Teasdale R.D."/>
            <person name="Liu E.T."/>
            <person name="Brusic V."/>
            <person name="Quackenbush J."/>
            <person name="Wahlestedt C."/>
            <person name="Mattick J.S."/>
            <person name="Hume D.A."/>
            <person name="Kai C."/>
            <person name="Sasaki D."/>
            <person name="Tomaru Y."/>
            <person name="Fukuda S."/>
            <person name="Kanamori-Katayama M."/>
            <person name="Suzuki M."/>
            <person name="Aoki J."/>
            <person name="Arakawa T."/>
            <person name="Iida J."/>
            <person name="Imamura K."/>
            <person name="Itoh M."/>
            <person name="Kato T."/>
            <person name="Kawaji H."/>
            <person name="Kawagashira N."/>
            <person name="Kawashima T."/>
            <person name="Kojima M."/>
            <person name="Kondo S."/>
            <person name="Konno H."/>
            <person name="Nakano K."/>
            <person name="Ninomiya N."/>
            <person name="Nishio T."/>
            <person name="Okada M."/>
            <person name="Plessy C."/>
            <person name="Shibata K."/>
            <person name="Shiraki T."/>
            <person name="Suzuki S."/>
            <person name="Tagami M."/>
            <person name="Waki K."/>
            <person name="Watahiki A."/>
            <person name="Okamura-Oho Y."/>
            <person name="Suzuki H."/>
            <person name="Kawai J."/>
            <person name="Hayashizaki Y."/>
        </authorList>
    </citation>
    <scope>NUCLEOTIDE SEQUENCE [LARGE SCALE MRNA] (ISOFORMS 1 AND 2)</scope>
    <source>
        <strain>C57BL/6J</strain>
        <tissue>Olfactory bulb</tissue>
        <tissue>Testis</tissue>
    </source>
</reference>
<reference key="2">
    <citation type="journal article" date="2009" name="Am. J. Respir. Cell Mol. Biol.">
        <title>Mutation of murine adenylate kinase 7 underlies a primary ciliary dyskinesia phenotype.</title>
        <authorList>
            <person name="Fernandez-Gonzalez A."/>
            <person name="Kourembanas S."/>
            <person name="Wyatt T.A."/>
            <person name="Mitsialis S.A."/>
        </authorList>
    </citation>
    <scope>DISRUPTION PHENOTYPE</scope>
    <scope>FUNCTION</scope>
</reference>
<reference key="3">
    <citation type="journal article" date="2010" name="Cell">
        <title>A tissue-specific atlas of mouse protein phosphorylation and expression.</title>
        <authorList>
            <person name="Huttlin E.L."/>
            <person name="Jedrychowski M.P."/>
            <person name="Elias J.E."/>
            <person name="Goswami T."/>
            <person name="Rad R."/>
            <person name="Beausoleil S.A."/>
            <person name="Villen J."/>
            <person name="Haas W."/>
            <person name="Sowa M.E."/>
            <person name="Gygi S.P."/>
        </authorList>
    </citation>
    <scope>IDENTIFICATION BY MASS SPECTROMETRY [LARGE SCALE ANALYSIS]</scope>
    <source>
        <tissue>Testis</tissue>
    </source>
</reference>
<reference key="4">
    <citation type="journal article" date="2018" name="Hum. Mol. Genet.">
        <title>Homozygous missense mutation L673P in adenylate kinase 7 (AK7) leads to primary male infertility and multiple morphological anomalies of the flagella but not to primary ciliary dyskinesia.</title>
        <authorList>
            <person name="Lores P."/>
            <person name="Coutton C."/>
            <person name="El Khouri E."/>
            <person name="Stouvenel L."/>
            <person name="Givelet M."/>
            <person name="Thomas L."/>
            <person name="Rode B."/>
            <person name="Schmitt A."/>
            <person name="Louis B."/>
            <person name="Sakheli Z."/>
            <person name="Chaudhry M."/>
            <person name="Fernandez-Gonzales A."/>
            <person name="Mitsialis A."/>
            <person name="Dacheux D."/>
            <person name="Wolf J.P."/>
            <person name="Papon J.F."/>
            <person name="Gacon G."/>
            <person name="Escudier E."/>
            <person name="Arnoult C."/>
            <person name="Bonhivers M."/>
            <person name="Savinov S.N."/>
            <person name="Amselem S."/>
            <person name="Ray P.F."/>
            <person name="Dulioust E."/>
            <person name="Toure A."/>
        </authorList>
    </citation>
    <scope>DISRUPTION PHENOTYPE</scope>
</reference>
<comment type="function">
    <text evidence="5">Nucleoside monophosphate (NMP) kinase that catalyzes the reversible transfer of the terminal phosphate group between nucleoside triphosphates and monophosphates. Has highest activity toward AMP, and weaker activity toward dAMP, CMP and dCMP. Also displays broad nucleoside diphosphate kinase activity. Involved in maintaining ciliary structure and function.</text>
</comment>
<comment type="catalytic activity">
    <reaction evidence="2">
        <text>AMP + ATP = 2 ADP</text>
        <dbReference type="Rhea" id="RHEA:12973"/>
        <dbReference type="ChEBI" id="CHEBI:30616"/>
        <dbReference type="ChEBI" id="CHEBI:456215"/>
        <dbReference type="ChEBI" id="CHEBI:456216"/>
        <dbReference type="EC" id="2.7.4.3"/>
    </reaction>
</comment>
<comment type="catalytic activity">
    <reaction evidence="2">
        <text>a 2'-deoxyribonucleoside 5'-diphosphate + ATP = a 2'-deoxyribonucleoside 5'-triphosphate + ADP</text>
        <dbReference type="Rhea" id="RHEA:44640"/>
        <dbReference type="ChEBI" id="CHEBI:30616"/>
        <dbReference type="ChEBI" id="CHEBI:61560"/>
        <dbReference type="ChEBI" id="CHEBI:73316"/>
        <dbReference type="ChEBI" id="CHEBI:456216"/>
        <dbReference type="EC" id="2.7.4.6"/>
    </reaction>
</comment>
<comment type="catalytic activity">
    <reaction evidence="2">
        <text>a ribonucleoside 5'-diphosphate + ATP = a ribonucleoside 5'-triphosphate + ADP</text>
        <dbReference type="Rhea" id="RHEA:18113"/>
        <dbReference type="ChEBI" id="CHEBI:30616"/>
        <dbReference type="ChEBI" id="CHEBI:57930"/>
        <dbReference type="ChEBI" id="CHEBI:61557"/>
        <dbReference type="ChEBI" id="CHEBI:456216"/>
        <dbReference type="EC" id="2.7.4.6"/>
    </reaction>
</comment>
<comment type="subcellular location">
    <subcellularLocation>
        <location evidence="2">Cytoplasm</location>
        <location evidence="2">Cytosol</location>
    </subcellularLocation>
    <subcellularLocation>
        <location evidence="2">Cell projection</location>
        <location evidence="2">Cilium</location>
        <location evidence="2">Flagellum</location>
    </subcellularLocation>
    <text evidence="2">Detected along the full length of sperm flagellum, where it colocalizes with alpha-tubulin.</text>
</comment>
<comment type="alternative products">
    <event type="alternative splicing"/>
    <isoform>
        <id>Q9D2H2-2</id>
        <name>1</name>
        <sequence type="displayed"/>
    </isoform>
    <isoform>
        <id>Q9D2H2-1</id>
        <name>2</name>
        <sequence type="described" ref="VSP_008474 VSP_008475 VSP_008476"/>
    </isoform>
</comment>
<comment type="disruption phenotype">
    <text evidence="5 6">Mutant mice present pathological signs characteristic of primary ciliary dyskinesia (PCD), including high prevalence of microtubular defects, significantly decreased ciliary beat frequency, hydrocephalus, abnormal spermatogenesis, mucus accumulation in the paranasal passages, and exacerbated respiratory responses upon allergen challenge. This phenotype arose serendipitously in the process of generating transgenic mice harboring a heme oxygenase 1 construct, due to the serendipitous disruption of Ak7 locus by the transgene insertion event (PubMed:18776131). Mutant testes reveal the absence of flagellum structures, compared with those from control littermates. In mutant testes, nearly all sperm heads are attached to cytoplasmic mass and not prolonged by flagellar structures, such as mitochondrial sheath, fibrous sheath and axoneme. In mutant epididymes, very few sperm structures are observed. The rare sperm flagellum observed show an absence of the central pair of microtubules (PubMed:29365104).</text>
</comment>
<comment type="similarity">
    <text evidence="8">In the central section; belongs to the adenylate kinase family.</text>
</comment>
<comment type="similarity">
    <text evidence="8">In the C-terminal section; belongs to the dpy-30 family.</text>
</comment>
<evidence type="ECO:0000250" key="1">
    <source>
        <dbReference type="UniProtKB" id="P69441"/>
    </source>
</evidence>
<evidence type="ECO:0000250" key="2">
    <source>
        <dbReference type="UniProtKB" id="Q96M32"/>
    </source>
</evidence>
<evidence type="ECO:0000255" key="3"/>
<evidence type="ECO:0000256" key="4">
    <source>
        <dbReference type="SAM" id="MobiDB-lite"/>
    </source>
</evidence>
<evidence type="ECO:0000269" key="5">
    <source>
    </source>
</evidence>
<evidence type="ECO:0000269" key="6">
    <source>
    </source>
</evidence>
<evidence type="ECO:0000303" key="7">
    <source>
    </source>
</evidence>
<evidence type="ECO:0000305" key="8"/>
<accession>Q9D2H2</accession>
<accession>Q8BVH3</accession>
<organism>
    <name type="scientific">Mus musculus</name>
    <name type="common">Mouse</name>
    <dbReference type="NCBI Taxonomy" id="10090"/>
    <lineage>
        <taxon>Eukaryota</taxon>
        <taxon>Metazoa</taxon>
        <taxon>Chordata</taxon>
        <taxon>Craniata</taxon>
        <taxon>Vertebrata</taxon>
        <taxon>Euteleostomi</taxon>
        <taxon>Mammalia</taxon>
        <taxon>Eutheria</taxon>
        <taxon>Euarchontoglires</taxon>
        <taxon>Glires</taxon>
        <taxon>Rodentia</taxon>
        <taxon>Myomorpha</taxon>
        <taxon>Muroidea</taxon>
        <taxon>Muridae</taxon>
        <taxon>Murinae</taxon>
        <taxon>Mus</taxon>
        <taxon>Mus</taxon>
    </lineage>
</organism>
<proteinExistence type="evidence at protein level"/>
<sequence length="614" mass="70675">MECDAVIYNITENVQQVEEALWAVSALNEEISHFEKRKVFILLSTVMTWARSKPLDPDDNEVPFTEEDYRRRKHHPNFLDHINAEKIVLKFGKNAKKFATYVVASGLQYGAEGGILHTFFKMAWLGEVPALPVFGDGTNCIPAIHVVDLAGVIQNIIDHVPKLHYLVAVDEAVHTLEDLVKCISKNTGPGKIQKVPKENAFLTKDLTQEYLDHLLVNLRMEALFVKENFNIRWVAQTGFVENINSILKEYKQSRGLLPIKICILGPPAVGKSSISEELAKYYKLHHIKMKDVIAEAIAKLEAIVAPKDSVEGEEEGEEEEEEENVDDAQELLDGIKESMEQNAGRLEDQYIIRFVKEKLKSMPCRNQGFILDGFPKTYDQAKDLFNQEEEEEEEEIRGKIFPYDKLITPEFVCGLDASDEFLKERVMNLPESVVAGTHYSQDRFLRSLSHYRDINTDDETVFNYFDELEIHPIHIDVGKLEDAQNRLAIKQLIKEIGKPRNYGLTDEEKAEEEKKAAEERLAKEAAQTAELEHKEAMEMAEKIARWEEWNKRLEEVKREERELLEVQSVPLRNYLMTYVMPTLMQGLNECCKVRPEDPVDFLAEYLFKNNPEMQ</sequence>
<name>KAD7_MOUSE</name>
<feature type="chain" id="PRO_0000158954" description="Adenylate kinase 7">
    <location>
        <begin position="1"/>
        <end position="614"/>
    </location>
</feature>
<feature type="region of interest" description="Adenylate kinase" evidence="2">
    <location>
        <begin position="258"/>
        <end position="503"/>
    </location>
</feature>
<feature type="region of interest" description="NMP" evidence="1">
    <location>
        <begin position="288"/>
        <end position="346"/>
    </location>
</feature>
<feature type="region of interest" description="Disordered" evidence="4">
    <location>
        <begin position="308"/>
        <end position="327"/>
    </location>
</feature>
<feature type="region of interest" description="LID" evidence="1">
    <location>
        <begin position="428"/>
        <end position="438"/>
    </location>
</feature>
<feature type="region of interest" description="DPY-30" evidence="2">
    <location>
        <begin position="570"/>
        <end position="614"/>
    </location>
</feature>
<feature type="coiled-coil region" evidence="3">
    <location>
        <begin position="376"/>
        <end position="568"/>
    </location>
</feature>
<feature type="compositionally biased region" description="Acidic residues" evidence="4">
    <location>
        <begin position="311"/>
        <end position="327"/>
    </location>
</feature>
<feature type="binding site" evidence="1">
    <location>
        <begin position="268"/>
        <end position="273"/>
    </location>
    <ligand>
        <name>ATP</name>
        <dbReference type="ChEBI" id="CHEBI:30616"/>
    </ligand>
</feature>
<feature type="binding site" evidence="1">
    <location>
        <begin position="323"/>
        <end position="346"/>
    </location>
    <ligand>
        <name>AMP</name>
        <dbReference type="ChEBI" id="CHEBI:456215"/>
    </ligand>
</feature>
<feature type="binding site" evidence="1">
    <location>
        <begin position="373"/>
        <end position="376"/>
    </location>
    <ligand>
        <name>AMP</name>
        <dbReference type="ChEBI" id="CHEBI:456215"/>
    </ligand>
</feature>
<feature type="binding site" evidence="1">
    <location>
        <position position="380"/>
    </location>
    <ligand>
        <name>AMP</name>
        <dbReference type="ChEBI" id="CHEBI:456215"/>
    </ligand>
</feature>
<feature type="binding site" evidence="1">
    <location>
        <position position="446"/>
    </location>
    <ligand>
        <name>AMP</name>
        <dbReference type="ChEBI" id="CHEBI:456215"/>
    </ligand>
</feature>
<feature type="binding site" evidence="1">
    <location>
        <position position="478"/>
    </location>
    <ligand>
        <name>ATP</name>
        <dbReference type="ChEBI" id="CHEBI:30616"/>
    </ligand>
</feature>
<feature type="splice variant" id="VSP_008474" description="In isoform 2." evidence="7">
    <original>MECDAVIYNITENVQQVEEALWAVSALNEEISHFEKRKVFILLSTVMTWARSKPLDP</original>
    <variation>M</variation>
    <location>
        <begin position="1"/>
        <end position="57"/>
    </location>
</feature>
<feature type="splice variant" id="VSP_008475" description="In isoform 2." evidence="7">
    <original>KCISKNTGPGKIQKVPKENAFLTKDL</original>
    <variation>KVCVLTPCRASLSSCTLWMLVTDFLC</variation>
    <location>
        <begin position="181"/>
        <end position="206"/>
    </location>
</feature>
<feature type="splice variant" id="VSP_008476" description="In isoform 2." evidence="7">
    <location>
        <begin position="207"/>
        <end position="614"/>
    </location>
</feature>
<dbReference type="EC" id="2.7.4.3" evidence="2"/>
<dbReference type="EC" id="2.7.4.6" evidence="2"/>
<dbReference type="EMBL" id="AK019664">
    <property type="protein sequence ID" value="BAB31828.1"/>
    <property type="molecule type" value="mRNA"/>
</dbReference>
<dbReference type="EMBL" id="AK078221">
    <property type="protein sequence ID" value="BAC37180.1"/>
    <property type="molecule type" value="mRNA"/>
</dbReference>
<dbReference type="RefSeq" id="NP_084463.1">
    <property type="nucleotide sequence ID" value="NM_030187.1"/>
</dbReference>
<dbReference type="SMR" id="Q9D2H2"/>
<dbReference type="BioGRID" id="219643">
    <property type="interactions" value="2"/>
</dbReference>
<dbReference type="FunCoup" id="Q9D2H2">
    <property type="interactions" value="717"/>
</dbReference>
<dbReference type="STRING" id="10090.ENSMUSP00000043145"/>
<dbReference type="iPTMnet" id="Q9D2H2"/>
<dbReference type="PhosphoSitePlus" id="Q9D2H2"/>
<dbReference type="PaxDb" id="10090-ENSMUSP00000043145"/>
<dbReference type="ProteomicsDB" id="269240">
    <molecule id="Q9D2H2-2"/>
</dbReference>
<dbReference type="ProteomicsDB" id="269241">
    <molecule id="Q9D2H2-1"/>
</dbReference>
<dbReference type="GeneID" id="78801"/>
<dbReference type="KEGG" id="mmu:78801"/>
<dbReference type="UCSC" id="uc007oyu.1">
    <molecule id="Q9D2H2-1"/>
    <property type="organism name" value="mouse"/>
</dbReference>
<dbReference type="AGR" id="MGI:1926051"/>
<dbReference type="CTD" id="122481"/>
<dbReference type="MGI" id="MGI:1926051">
    <property type="gene designation" value="Ak7"/>
</dbReference>
<dbReference type="eggNOG" id="KOG3078">
    <property type="taxonomic scope" value="Eukaryota"/>
</dbReference>
<dbReference type="InParanoid" id="Q9D2H2"/>
<dbReference type="OrthoDB" id="10262413at2759"/>
<dbReference type="PhylomeDB" id="Q9D2H2"/>
<dbReference type="Reactome" id="R-MMU-499943">
    <property type="pathway name" value="Interconversion of nucleotide di- and triphosphates"/>
</dbReference>
<dbReference type="BioGRID-ORCS" id="78801">
    <property type="hits" value="0 hits in 79 CRISPR screens"/>
</dbReference>
<dbReference type="ChiTaRS" id="Ak7">
    <property type="organism name" value="mouse"/>
</dbReference>
<dbReference type="PRO" id="PR:Q9D2H2"/>
<dbReference type="Proteomes" id="UP000000589">
    <property type="component" value="Unplaced"/>
</dbReference>
<dbReference type="RNAct" id="Q9D2H2">
    <property type="molecule type" value="protein"/>
</dbReference>
<dbReference type="GO" id="GO:0005829">
    <property type="term" value="C:cytosol"/>
    <property type="evidence" value="ECO:0007669"/>
    <property type="project" value="UniProtKB-SubCell"/>
</dbReference>
<dbReference type="GO" id="GO:0005576">
    <property type="term" value="C:extracellular region"/>
    <property type="evidence" value="ECO:0007669"/>
    <property type="project" value="GOC"/>
</dbReference>
<dbReference type="GO" id="GO:0031514">
    <property type="term" value="C:motile cilium"/>
    <property type="evidence" value="ECO:0007669"/>
    <property type="project" value="UniProtKB-SubCell"/>
</dbReference>
<dbReference type="GO" id="GO:0004127">
    <property type="term" value="F:(d)CMP kinase activity"/>
    <property type="evidence" value="ECO:0000250"/>
    <property type="project" value="UniProtKB"/>
</dbReference>
<dbReference type="GO" id="GO:0004017">
    <property type="term" value="F:adenylate kinase activity"/>
    <property type="evidence" value="ECO:0000250"/>
    <property type="project" value="UniProtKB"/>
</dbReference>
<dbReference type="GO" id="GO:0005524">
    <property type="term" value="F:ATP binding"/>
    <property type="evidence" value="ECO:0007669"/>
    <property type="project" value="UniProtKB-KW"/>
</dbReference>
<dbReference type="GO" id="GO:0004550">
    <property type="term" value="F:nucleoside diphosphate kinase activity"/>
    <property type="evidence" value="ECO:0000250"/>
    <property type="project" value="UniProtKB"/>
</dbReference>
<dbReference type="GO" id="GO:0035082">
    <property type="term" value="P:axoneme assembly"/>
    <property type="evidence" value="ECO:0000315"/>
    <property type="project" value="MGI"/>
</dbReference>
<dbReference type="GO" id="GO:0007420">
    <property type="term" value="P:brain development"/>
    <property type="evidence" value="ECO:0000315"/>
    <property type="project" value="MGI"/>
</dbReference>
<dbReference type="GO" id="GO:0003351">
    <property type="term" value="P:epithelial cilium movement involved in extracellular fluid movement"/>
    <property type="evidence" value="ECO:0000315"/>
    <property type="project" value="MGI"/>
</dbReference>
<dbReference type="GO" id="GO:0051649">
    <property type="term" value="P:establishment of localization in cell"/>
    <property type="evidence" value="ECO:0000315"/>
    <property type="project" value="MGI"/>
</dbReference>
<dbReference type="GO" id="GO:0002437">
    <property type="term" value="P:inflammatory response to antigenic stimulus"/>
    <property type="evidence" value="ECO:0000315"/>
    <property type="project" value="MGI"/>
</dbReference>
<dbReference type="GO" id="GO:0007283">
    <property type="term" value="P:spermatogenesis"/>
    <property type="evidence" value="ECO:0000315"/>
    <property type="project" value="MGI"/>
</dbReference>
<dbReference type="CDD" id="cd01428">
    <property type="entry name" value="ADK"/>
    <property type="match status" value="1"/>
</dbReference>
<dbReference type="CDD" id="cd22967">
    <property type="entry name" value="DD_AK7"/>
    <property type="match status" value="1"/>
</dbReference>
<dbReference type="FunFam" id="3.40.50.300:FF:001489">
    <property type="entry name" value="Adenylate kinase 7"/>
    <property type="match status" value="1"/>
</dbReference>
<dbReference type="Gene3D" id="1.20.890.10">
    <property type="entry name" value="cAMP-dependent protein kinase regulatory subunit, dimerization-anchoring domain"/>
    <property type="match status" value="1"/>
</dbReference>
<dbReference type="Gene3D" id="3.40.50.720">
    <property type="entry name" value="NAD(P)-binding Rossmann-like Domain"/>
    <property type="match status" value="1"/>
</dbReference>
<dbReference type="Gene3D" id="3.40.50.300">
    <property type="entry name" value="P-loop containing nucleotide triphosphate hydrolases"/>
    <property type="match status" value="1"/>
</dbReference>
<dbReference type="InterPro" id="IPR000850">
    <property type="entry name" value="Adenylat/UMP-CMP_kin"/>
</dbReference>
<dbReference type="InterPro" id="IPR047499">
    <property type="entry name" value="DD_AK7"/>
</dbReference>
<dbReference type="InterPro" id="IPR007858">
    <property type="entry name" value="Dpy-30_motif"/>
</dbReference>
<dbReference type="InterPro" id="IPR036291">
    <property type="entry name" value="NAD(P)-bd_dom_sf"/>
</dbReference>
<dbReference type="InterPro" id="IPR027417">
    <property type="entry name" value="P-loop_NTPase"/>
</dbReference>
<dbReference type="PANTHER" id="PTHR23359">
    <property type="entry name" value="NUCLEOTIDE KINASE"/>
    <property type="match status" value="1"/>
</dbReference>
<dbReference type="Pfam" id="PF00406">
    <property type="entry name" value="ADK"/>
    <property type="match status" value="1"/>
</dbReference>
<dbReference type="Pfam" id="PF05186">
    <property type="entry name" value="Dpy-30"/>
    <property type="match status" value="1"/>
</dbReference>
<dbReference type="SUPFAM" id="SSF51735">
    <property type="entry name" value="NAD(P)-binding Rossmann-fold domains"/>
    <property type="match status" value="1"/>
</dbReference>
<dbReference type="SUPFAM" id="SSF52540">
    <property type="entry name" value="P-loop containing nucleoside triphosphate hydrolases"/>
    <property type="match status" value="1"/>
</dbReference>
<protein>
    <recommendedName>
        <fullName>Adenylate kinase 7</fullName>
        <shortName>AK 7</shortName>
        <ecNumber evidence="2">2.7.4.3</ecNumber>
        <ecNumber evidence="2">2.7.4.6</ecNumber>
    </recommendedName>
    <alternativeName>
        <fullName>ATP-AMP transphosphorylase 7</fullName>
    </alternativeName>
</protein>
<keyword id="KW-0025">Alternative splicing</keyword>
<keyword id="KW-0067">ATP-binding</keyword>
<keyword id="KW-0966">Cell projection</keyword>
<keyword id="KW-0969">Cilium</keyword>
<keyword id="KW-0970">Cilium biogenesis/degradation</keyword>
<keyword id="KW-0175">Coiled coil</keyword>
<keyword id="KW-0963">Cytoplasm</keyword>
<keyword id="KW-0282">Flagellum</keyword>
<keyword id="KW-0418">Kinase</keyword>
<keyword id="KW-0547">Nucleotide-binding</keyword>
<keyword id="KW-1185">Reference proteome</keyword>
<keyword id="KW-0808">Transferase</keyword>